<protein>
    <recommendedName>
        <fullName>3-hexulose-6-phosphate isomerase</fullName>
        <ecNumber>5.3.1.27</ecNumber>
    </recommendedName>
    <alternativeName>
        <fullName>6-phospho-3-hexuloisomerase</fullName>
        <shortName>PHI</shortName>
    </alternativeName>
</protein>
<accession>Q9S0X3</accession>
<comment type="function">
    <text evidence="3">Catalyzes the isomerization between 3-hexulose 6-phosphate and fructose 6-phosphate.</text>
</comment>
<comment type="catalytic activity">
    <reaction>
        <text>D-arabino-hex-3-ulose 6-phosphate = beta-D-fructose 6-phosphate</text>
        <dbReference type="Rhea" id="RHEA:25900"/>
        <dbReference type="ChEBI" id="CHEBI:57634"/>
        <dbReference type="ChEBI" id="CHEBI:58542"/>
        <dbReference type="EC" id="5.3.1.27"/>
    </reaction>
</comment>
<comment type="pathway">
    <text>One-carbon metabolism; formaldehyde assimilation via RuMP pathway; D-fructose 6-phosphate from D-ribulose 5-phosphate and formaldehyde: step 2/2.</text>
</comment>
<comment type="subunit">
    <text evidence="3">Homodimer.</text>
</comment>
<comment type="similarity">
    <text evidence="4">Belongs to the SIS family. PHI subfamily.</text>
</comment>
<dbReference type="EC" id="5.3.1.27"/>
<dbReference type="EMBL" id="AB026428">
    <property type="protein sequence ID" value="BAA83098.1"/>
    <property type="molecule type" value="Genomic_DNA"/>
</dbReference>
<dbReference type="SMR" id="Q9S0X3"/>
<dbReference type="BRENDA" id="5.3.1.27">
    <property type="organism ID" value="7933"/>
</dbReference>
<dbReference type="UniPathway" id="UPA00294">
    <property type="reaction ID" value="UER00435"/>
</dbReference>
<dbReference type="GO" id="GO:0043800">
    <property type="term" value="F:6-phospho-3-hexuloisomerase activity"/>
    <property type="evidence" value="ECO:0007669"/>
    <property type="project" value="UniProtKB-EC"/>
</dbReference>
<dbReference type="GO" id="GO:0097367">
    <property type="term" value="F:carbohydrate derivative binding"/>
    <property type="evidence" value="ECO:0007669"/>
    <property type="project" value="InterPro"/>
</dbReference>
<dbReference type="GO" id="GO:1901135">
    <property type="term" value="P:carbohydrate derivative metabolic process"/>
    <property type="evidence" value="ECO:0007669"/>
    <property type="project" value="InterPro"/>
</dbReference>
<dbReference type="GO" id="GO:0019647">
    <property type="term" value="P:formaldehyde assimilation via ribulose monophosphate cycle"/>
    <property type="evidence" value="ECO:0007669"/>
    <property type="project" value="UniProtKB-UniPathway"/>
</dbReference>
<dbReference type="CDD" id="cd05005">
    <property type="entry name" value="SIS_PHI"/>
    <property type="match status" value="1"/>
</dbReference>
<dbReference type="Gene3D" id="3.40.50.10490">
    <property type="entry name" value="Glucose-6-phosphate isomerase like protein, domain 1"/>
    <property type="match status" value="1"/>
</dbReference>
<dbReference type="InterPro" id="IPR017552">
    <property type="entry name" value="PHI/rmpB"/>
</dbReference>
<dbReference type="InterPro" id="IPR001347">
    <property type="entry name" value="SIS_dom"/>
</dbReference>
<dbReference type="InterPro" id="IPR046348">
    <property type="entry name" value="SIS_dom_sf"/>
</dbReference>
<dbReference type="NCBIfam" id="TIGR03127">
    <property type="entry name" value="RuMP_HxlB"/>
    <property type="match status" value="1"/>
</dbReference>
<dbReference type="PANTHER" id="PTHR43443">
    <property type="entry name" value="3-HEXULOSE-6-PHOSPHATE ISOMERASE"/>
    <property type="match status" value="1"/>
</dbReference>
<dbReference type="PANTHER" id="PTHR43443:SF1">
    <property type="entry name" value="3-HEXULOSE-6-PHOSPHATE ISOMERASE"/>
    <property type="match status" value="1"/>
</dbReference>
<dbReference type="Pfam" id="PF01380">
    <property type="entry name" value="SIS"/>
    <property type="match status" value="1"/>
</dbReference>
<dbReference type="SUPFAM" id="SSF53697">
    <property type="entry name" value="SIS domain"/>
    <property type="match status" value="1"/>
</dbReference>
<dbReference type="PROSITE" id="PS51464">
    <property type="entry name" value="SIS"/>
    <property type="match status" value="1"/>
</dbReference>
<evidence type="ECO:0000255" key="1"/>
<evidence type="ECO:0000255" key="2">
    <source>
        <dbReference type="PROSITE-ProRule" id="PRU00797"/>
    </source>
</evidence>
<evidence type="ECO:0000269" key="3">
    <source>
    </source>
</evidence>
<evidence type="ECO:0000305" key="4"/>
<reference key="1">
    <citation type="journal article" date="1999" name="FEMS Microbiol. Lett.">
        <title>Organization of the genes involved in the ribulose monophosphate pathway in an obligate methylotrophic bacterium, Methylomonas aminofaciens 77a.</title>
        <authorList>
            <person name="Sakai Y."/>
            <person name="Mitsui R."/>
            <person name="Katayama Y."/>
            <person name="Yanase H."/>
            <person name="Kato N."/>
        </authorList>
    </citation>
    <scope>NUCLEOTIDE SEQUENCE [GENOMIC DNA]</scope>
    <scope>PROTEIN SEQUENCE OF 1-20</scope>
    <scope>FUNCTION</scope>
    <scope>SUBUNIT</scope>
    <source>
        <strain>77a</strain>
    </source>
</reference>
<organism>
    <name type="scientific">Methylomonas aminofaciens</name>
    <dbReference type="NCBI Taxonomy" id="46896"/>
    <lineage>
        <taxon>Bacteria</taxon>
        <taxon>Pseudomonadati</taxon>
        <taxon>Pseudomonadota</taxon>
        <taxon>Gammaproteobacteria</taxon>
        <taxon>Methylococcales</taxon>
        <taxon>Methylococcaceae</taxon>
        <taxon>Methylomonas</taxon>
    </lineage>
</organism>
<keyword id="KW-0119">Carbohydrate metabolism</keyword>
<keyword id="KW-0903">Direct protein sequencing</keyword>
<keyword id="KW-0413">Isomerase</keyword>
<name>PHI_METAM</name>
<feature type="chain" id="PRO_0000136567" description="3-hexulose-6-phosphate isomerase">
    <location>
        <begin position="1"/>
        <end position="181"/>
    </location>
</feature>
<feature type="domain" description="SIS" evidence="2">
    <location>
        <begin position="27"/>
        <end position="168"/>
    </location>
</feature>
<feature type="active site" description="Proton acceptor" evidence="1">
    <location>
        <position position="148"/>
    </location>
</feature>
<feature type="binding site" evidence="1">
    <location>
        <position position="45"/>
    </location>
    <ligand>
        <name>substrate</name>
    </ligand>
</feature>
<feature type="binding site" evidence="1">
    <location>
        <begin position="84"/>
        <end position="89"/>
    </location>
    <ligand>
        <name>substrate</name>
    </ligand>
</feature>
<sequence>MNKYQELVVSKLTNVINNTAEGYDDKILSLVDAAGRTFIGGAGRSLLVSRFFAMRLVHAGYQVSMVGEVVTPSIQAGDLFIVISGSGSTETLMPLVKKAKSQGAKIIVISMKAQSPMAELADLVVPVGGNDANAFDKTHGMPMGTIFELSTLWFLEATIAKLVDQKGLTEEGMRAIHANLE</sequence>
<proteinExistence type="evidence at protein level"/>
<gene>
    <name type="primary">rmpB</name>
</gene>